<reference key="1">
    <citation type="journal article" date="2002" name="Nature">
        <title>Comparison of the genomes of two Xanthomonas pathogens with differing host specificities.</title>
        <authorList>
            <person name="da Silva A.C.R."/>
            <person name="Ferro J.A."/>
            <person name="Reinach F.C."/>
            <person name="Farah C.S."/>
            <person name="Furlan L.R."/>
            <person name="Quaggio R.B."/>
            <person name="Monteiro-Vitorello C.B."/>
            <person name="Van Sluys M.A."/>
            <person name="Almeida N.F. Jr."/>
            <person name="Alves L.M.C."/>
            <person name="do Amaral A.M."/>
            <person name="Bertolini M.C."/>
            <person name="Camargo L.E.A."/>
            <person name="Camarotte G."/>
            <person name="Cannavan F."/>
            <person name="Cardozo J."/>
            <person name="Chambergo F."/>
            <person name="Ciapina L.P."/>
            <person name="Cicarelli R.M.B."/>
            <person name="Coutinho L.L."/>
            <person name="Cursino-Santos J.R."/>
            <person name="El-Dorry H."/>
            <person name="Faria J.B."/>
            <person name="Ferreira A.J.S."/>
            <person name="Ferreira R.C.C."/>
            <person name="Ferro M.I.T."/>
            <person name="Formighieri E.F."/>
            <person name="Franco M.C."/>
            <person name="Greggio C.C."/>
            <person name="Gruber A."/>
            <person name="Katsuyama A.M."/>
            <person name="Kishi L.T."/>
            <person name="Leite R.P."/>
            <person name="Lemos E.G.M."/>
            <person name="Lemos M.V.F."/>
            <person name="Locali E.C."/>
            <person name="Machado M.A."/>
            <person name="Madeira A.M.B.N."/>
            <person name="Martinez-Rossi N.M."/>
            <person name="Martins E.C."/>
            <person name="Meidanis J."/>
            <person name="Menck C.F.M."/>
            <person name="Miyaki C.Y."/>
            <person name="Moon D.H."/>
            <person name="Moreira L.M."/>
            <person name="Novo M.T.M."/>
            <person name="Okura V.K."/>
            <person name="Oliveira M.C."/>
            <person name="Oliveira V.R."/>
            <person name="Pereira H.A."/>
            <person name="Rossi A."/>
            <person name="Sena J.A.D."/>
            <person name="Silva C."/>
            <person name="de Souza R.F."/>
            <person name="Spinola L.A.F."/>
            <person name="Takita M.A."/>
            <person name="Tamura R.E."/>
            <person name="Teixeira E.C."/>
            <person name="Tezza R.I.D."/>
            <person name="Trindade dos Santos M."/>
            <person name="Truffi D."/>
            <person name="Tsai S.M."/>
            <person name="White F.F."/>
            <person name="Setubal J.C."/>
            <person name="Kitajima J.P."/>
        </authorList>
    </citation>
    <scope>NUCLEOTIDE SEQUENCE [LARGE SCALE GENOMIC DNA]</scope>
    <source>
        <strain>ATCC 33913 / DSM 3586 / NCPPB 528 / LMG 568 / P 25</strain>
    </source>
</reference>
<reference evidence="8" key="2">
    <citation type="journal article" date="2010" name="Structure">
        <title>Structural basis of the sensor-synthase interaction in autoinduction of the quorum sensing signal DSF biosynthesis.</title>
        <authorList>
            <person name="Cheng Z."/>
            <person name="He Y.W."/>
            <person name="Lim S.C."/>
            <person name="Qamra R."/>
            <person name="Walsh M.A."/>
            <person name="Zhang L.H."/>
            <person name="Song H."/>
        </authorList>
    </citation>
    <scope>X-RAY CRYSTALLOGRAPHY (2.50 ANGSTROMS) OF 449-590 IN COMPLEX WITH RPFF</scope>
    <scope>FUNCTION</scope>
    <scope>INTERACTION WITH RPFF</scope>
    <scope>DOMAIN</scope>
    <scope>DISRUPTION PHENOTYPE</scope>
    <scope>MUTAGENESIS OF GLU-495 AND VAL-529</scope>
    <source>
        <strain>XC1</strain>
    </source>
</reference>
<protein>
    <recommendedName>
        <fullName>Sensory/regulatory protein RpfC</fullName>
        <ecNumber>2.7.13.3</ecNumber>
    </recommendedName>
</protein>
<gene>
    <name type="primary">rpfC</name>
    <name type="ordered locus">XCC1856</name>
</gene>
<proteinExistence type="evidence at protein level"/>
<feature type="chain" id="PRO_0000074862" description="Sensory/regulatory protein RpfC">
    <location>
        <begin position="1"/>
        <end position="726"/>
    </location>
</feature>
<feature type="transmembrane region" description="Helical" evidence="2">
    <location>
        <begin position="23"/>
        <end position="40"/>
    </location>
</feature>
<feature type="transmembrane region" description="Helical" evidence="2">
    <location>
        <begin position="52"/>
        <end position="72"/>
    </location>
</feature>
<feature type="transmembrane region" description="Helical" evidence="2">
    <location>
        <begin position="95"/>
        <end position="115"/>
    </location>
</feature>
<feature type="transmembrane region" description="Helical" evidence="2">
    <location>
        <begin position="128"/>
        <end position="148"/>
    </location>
</feature>
<feature type="transmembrane region" description="Helical" evidence="2">
    <location>
        <begin position="152"/>
        <end position="172"/>
    </location>
</feature>
<feature type="domain" description="Histidine kinase" evidence="3">
    <location>
        <begin position="195"/>
        <end position="417"/>
    </location>
</feature>
<feature type="domain" description="Response regulatory" evidence="5">
    <location>
        <begin position="463"/>
        <end position="581"/>
    </location>
</feature>
<feature type="domain" description="HPt" evidence="4">
    <location>
        <begin position="618"/>
        <end position="711"/>
    </location>
</feature>
<feature type="modified residue" description="Phosphohistidine; by autocatalysis" evidence="3">
    <location>
        <position position="198"/>
    </location>
</feature>
<feature type="modified residue" description="4-aspartylphosphate" evidence="5">
    <location>
        <position position="512"/>
    </location>
</feature>
<feature type="modified residue" description="Phosphohistidine" evidence="4">
    <location>
        <position position="657"/>
    </location>
</feature>
<feature type="mutagenesis site" description="Attenuates the inhibitory activity on DSF production." evidence="6">
    <original>E</original>
    <variation>A</variation>
    <location>
        <position position="495"/>
    </location>
</feature>
<feature type="mutagenesis site" description="Attenuates the inhibitory activity on DSF production." evidence="6">
    <original>V</original>
    <variation>A</variation>
    <location>
        <position position="529"/>
    </location>
</feature>
<feature type="strand" evidence="9">
    <location>
        <begin position="463"/>
        <end position="467"/>
    </location>
</feature>
<feature type="helix" evidence="9">
    <location>
        <begin position="471"/>
        <end position="482"/>
    </location>
</feature>
<feature type="strand" evidence="9">
    <location>
        <begin position="487"/>
        <end position="493"/>
    </location>
</feature>
<feature type="helix" evidence="9">
    <location>
        <begin position="494"/>
        <end position="503"/>
    </location>
</feature>
<feature type="strand" evidence="9">
    <location>
        <begin position="507"/>
        <end position="513"/>
    </location>
</feature>
<feature type="strand" evidence="9">
    <location>
        <begin position="516"/>
        <end position="518"/>
    </location>
</feature>
<feature type="helix" evidence="9">
    <location>
        <begin position="520"/>
        <end position="532"/>
    </location>
</feature>
<feature type="strand" evidence="9">
    <location>
        <begin position="540"/>
        <end position="545"/>
    </location>
</feature>
<feature type="helix" evidence="9">
    <location>
        <begin position="549"/>
        <end position="557"/>
    </location>
</feature>
<feature type="strand" evidence="9">
    <location>
        <begin position="561"/>
        <end position="567"/>
    </location>
</feature>
<feature type="helix" evidence="9">
    <location>
        <begin position="570"/>
        <end position="580"/>
    </location>
</feature>
<name>RPFC_XANCP</name>
<keyword id="KW-0002">3D-structure</keyword>
<keyword id="KW-0067">ATP-binding</keyword>
<keyword id="KW-0997">Cell inner membrane</keyword>
<keyword id="KW-1003">Cell membrane</keyword>
<keyword id="KW-0418">Kinase</keyword>
<keyword id="KW-0472">Membrane</keyword>
<keyword id="KW-0547">Nucleotide-binding</keyword>
<keyword id="KW-0597">Phosphoprotein</keyword>
<keyword id="KW-1185">Reference proteome</keyword>
<keyword id="KW-0804">Transcription</keyword>
<keyword id="KW-0805">Transcription regulation</keyword>
<keyword id="KW-0808">Transferase</keyword>
<keyword id="KW-0812">Transmembrane</keyword>
<keyword id="KW-1133">Transmembrane helix</keyword>
<keyword id="KW-0902">Two-component regulatory system</keyword>
<keyword id="KW-0843">Virulence</keyword>
<dbReference type="EC" id="2.7.13.3"/>
<dbReference type="EMBL" id="AE008922">
    <property type="protein sequence ID" value="AAM41145.1"/>
    <property type="molecule type" value="Genomic_DNA"/>
</dbReference>
<dbReference type="RefSeq" id="NP_637221.1">
    <property type="nucleotide sequence ID" value="NC_003902.1"/>
</dbReference>
<dbReference type="RefSeq" id="WP_011037026.1">
    <property type="nucleotide sequence ID" value="NC_003902.1"/>
</dbReference>
<dbReference type="PDB" id="3M6M">
    <property type="method" value="X-ray"/>
    <property type="resolution" value="2.50 A"/>
    <property type="chains" value="D/E/F=449-590"/>
</dbReference>
<dbReference type="PDBsum" id="3M6M"/>
<dbReference type="SMR" id="P0C0F6"/>
<dbReference type="DIP" id="DIP-59500N"/>
<dbReference type="IntAct" id="P0C0F6">
    <property type="interactions" value="1"/>
</dbReference>
<dbReference type="STRING" id="190485.XCC1856"/>
<dbReference type="EnsemblBacteria" id="AAM41145">
    <property type="protein sequence ID" value="AAM41145"/>
    <property type="gene ID" value="XCC1856"/>
</dbReference>
<dbReference type="KEGG" id="xcc:XCC1856"/>
<dbReference type="PATRIC" id="fig|190485.4.peg.1980"/>
<dbReference type="eggNOG" id="COG0784">
    <property type="taxonomic scope" value="Bacteria"/>
</dbReference>
<dbReference type="eggNOG" id="COG2198">
    <property type="taxonomic scope" value="Bacteria"/>
</dbReference>
<dbReference type="eggNOG" id="COG2205">
    <property type="taxonomic scope" value="Bacteria"/>
</dbReference>
<dbReference type="HOGENOM" id="CLU_000445_104_10_6"/>
<dbReference type="OrthoDB" id="9797243at2"/>
<dbReference type="BRENDA" id="2.7.13.3">
    <property type="organism ID" value="6708"/>
</dbReference>
<dbReference type="EvolutionaryTrace" id="P0C0F6"/>
<dbReference type="Proteomes" id="UP000001010">
    <property type="component" value="Chromosome"/>
</dbReference>
<dbReference type="GO" id="GO:0005886">
    <property type="term" value="C:plasma membrane"/>
    <property type="evidence" value="ECO:0007669"/>
    <property type="project" value="UniProtKB-SubCell"/>
</dbReference>
<dbReference type="GO" id="GO:0005524">
    <property type="term" value="F:ATP binding"/>
    <property type="evidence" value="ECO:0007669"/>
    <property type="project" value="UniProtKB-KW"/>
</dbReference>
<dbReference type="GO" id="GO:0000155">
    <property type="term" value="F:phosphorelay sensor kinase activity"/>
    <property type="evidence" value="ECO:0007669"/>
    <property type="project" value="InterPro"/>
</dbReference>
<dbReference type="CDD" id="cd16922">
    <property type="entry name" value="HATPase_EvgS-ArcB-TorS-like"/>
    <property type="match status" value="1"/>
</dbReference>
<dbReference type="CDD" id="cd00082">
    <property type="entry name" value="HisKA"/>
    <property type="match status" value="1"/>
</dbReference>
<dbReference type="CDD" id="cd17546">
    <property type="entry name" value="REC_hyHK_CKI1_RcsC-like"/>
    <property type="match status" value="1"/>
</dbReference>
<dbReference type="FunFam" id="3.30.565.10:FF:000010">
    <property type="entry name" value="Sensor histidine kinase RcsC"/>
    <property type="match status" value="1"/>
</dbReference>
<dbReference type="FunFam" id="1.10.287.130:FF:000002">
    <property type="entry name" value="Two-component osmosensing histidine kinase"/>
    <property type="match status" value="1"/>
</dbReference>
<dbReference type="Gene3D" id="1.10.287.130">
    <property type="match status" value="1"/>
</dbReference>
<dbReference type="Gene3D" id="3.40.50.2300">
    <property type="match status" value="1"/>
</dbReference>
<dbReference type="Gene3D" id="3.30.565.10">
    <property type="entry name" value="Histidine kinase-like ATPase, C-terminal domain"/>
    <property type="match status" value="1"/>
</dbReference>
<dbReference type="Gene3D" id="1.20.120.160">
    <property type="entry name" value="HPT domain"/>
    <property type="match status" value="1"/>
</dbReference>
<dbReference type="InterPro" id="IPR011006">
    <property type="entry name" value="CheY-like_superfamily"/>
</dbReference>
<dbReference type="InterPro" id="IPR036890">
    <property type="entry name" value="HATPase_C_sf"/>
</dbReference>
<dbReference type="InterPro" id="IPR005467">
    <property type="entry name" value="His_kinase_dom"/>
</dbReference>
<dbReference type="InterPro" id="IPR003661">
    <property type="entry name" value="HisK_dim/P_dom"/>
</dbReference>
<dbReference type="InterPro" id="IPR036097">
    <property type="entry name" value="HisK_dim/P_sf"/>
</dbReference>
<dbReference type="InterPro" id="IPR036641">
    <property type="entry name" value="HPT_dom_sf"/>
</dbReference>
<dbReference type="InterPro" id="IPR004358">
    <property type="entry name" value="Sig_transdc_His_kin-like_C"/>
</dbReference>
<dbReference type="InterPro" id="IPR008207">
    <property type="entry name" value="Sig_transdc_His_kin_Hpt_dom"/>
</dbReference>
<dbReference type="InterPro" id="IPR001789">
    <property type="entry name" value="Sig_transdc_resp-reg_receiver"/>
</dbReference>
<dbReference type="PANTHER" id="PTHR45339">
    <property type="entry name" value="HYBRID SIGNAL TRANSDUCTION HISTIDINE KINASE J"/>
    <property type="match status" value="1"/>
</dbReference>
<dbReference type="PANTHER" id="PTHR45339:SF1">
    <property type="entry name" value="HYBRID SIGNAL TRANSDUCTION HISTIDINE KINASE J"/>
    <property type="match status" value="1"/>
</dbReference>
<dbReference type="Pfam" id="PF02518">
    <property type="entry name" value="HATPase_c"/>
    <property type="match status" value="1"/>
</dbReference>
<dbReference type="Pfam" id="PF00512">
    <property type="entry name" value="HisKA"/>
    <property type="match status" value="1"/>
</dbReference>
<dbReference type="Pfam" id="PF01627">
    <property type="entry name" value="Hpt"/>
    <property type="match status" value="1"/>
</dbReference>
<dbReference type="Pfam" id="PF00072">
    <property type="entry name" value="Response_reg"/>
    <property type="match status" value="1"/>
</dbReference>
<dbReference type="PRINTS" id="PR00344">
    <property type="entry name" value="BCTRLSENSOR"/>
</dbReference>
<dbReference type="SMART" id="SM00387">
    <property type="entry name" value="HATPase_c"/>
    <property type="match status" value="1"/>
</dbReference>
<dbReference type="SMART" id="SM00388">
    <property type="entry name" value="HisKA"/>
    <property type="match status" value="1"/>
</dbReference>
<dbReference type="SMART" id="SM00073">
    <property type="entry name" value="HPT"/>
    <property type="match status" value="1"/>
</dbReference>
<dbReference type="SMART" id="SM00448">
    <property type="entry name" value="REC"/>
    <property type="match status" value="1"/>
</dbReference>
<dbReference type="SUPFAM" id="SSF55874">
    <property type="entry name" value="ATPase domain of HSP90 chaperone/DNA topoisomerase II/histidine kinase"/>
    <property type="match status" value="1"/>
</dbReference>
<dbReference type="SUPFAM" id="SSF52172">
    <property type="entry name" value="CheY-like"/>
    <property type="match status" value="1"/>
</dbReference>
<dbReference type="SUPFAM" id="SSF47226">
    <property type="entry name" value="Histidine-containing phosphotransfer domain, HPT domain"/>
    <property type="match status" value="1"/>
</dbReference>
<dbReference type="SUPFAM" id="SSF47384">
    <property type="entry name" value="Homodimeric domain of signal transducing histidine kinase"/>
    <property type="match status" value="1"/>
</dbReference>
<dbReference type="PROSITE" id="PS50109">
    <property type="entry name" value="HIS_KIN"/>
    <property type="match status" value="1"/>
</dbReference>
<dbReference type="PROSITE" id="PS50894">
    <property type="entry name" value="HPT"/>
    <property type="match status" value="1"/>
</dbReference>
<dbReference type="PROSITE" id="PS50110">
    <property type="entry name" value="RESPONSE_REGULATORY"/>
    <property type="match status" value="1"/>
</dbReference>
<comment type="function">
    <text evidence="1 6">Hybrid sensor kinase that regulates diverse biological functions through two distinct molecular mechanisms (By similarity). At low cell density, the extracellular concentration of the diffusible signaling factor (DSF) is below a threshold, and unphosphorylated RpfC is involved in the negative regulation of DSF synthesis, via direct interaction with the DSF synthase RpfF. Interaction prevents synthesis of DSF, which remains at a basal level. This activity does not involve the phosphorelay mechanism and is not dependent on RpfG (PubMed:20826346). Is also member of the two-component regulatory system RpfG/RpfC, which is involved in the perception and response to DSF, which is essential for cell-cell signaling (By similarity). At high cell density, the level of extracellular DSF increases and binding of DSF to the sensor region of RpfC causes autophosphorylation of RpfC, which results in the release of RpfF and the activation of RpfG via a four-step phosphorelay (By similarity). Activation of RpfG leads to the positive regulation of biofilm dispersal and the production of virulence factors (By similarity).</text>
</comment>
<comment type="catalytic activity">
    <reaction evidence="1">
        <text>ATP + protein L-histidine = ADP + protein N-phospho-L-histidine.</text>
        <dbReference type="EC" id="2.7.13.3"/>
    </reaction>
</comment>
<comment type="activity regulation">
    <text evidence="1">Binding of DSF to the sensor region causes allosteric change, which facilitates RpfC autophosphorylation.</text>
</comment>
<comment type="subunit">
    <text evidence="6">At low DSF concentrations, interacts with RpfF.</text>
</comment>
<comment type="interaction">
    <interactant intactId="EBI-15876881">
        <id>P0C0F6</id>
    </interactant>
    <interactant intactId="EBI-15876866">
        <id>Q7CLS3</id>
        <label>rpfF</label>
    </interactant>
    <organismsDiffer>false</organismsDiffer>
    <experiments>5</experiments>
</comment>
<comment type="subcellular location">
    <subcellularLocation>
        <location evidence="7">Cell inner membrane</location>
        <topology evidence="2">Multi-pass membrane protein</topology>
    </subcellularLocation>
    <text evidence="1">Localizes at the cell poles.</text>
</comment>
<comment type="domain">
    <text evidence="1 6">The N-terminal input region plays an essential role in DSF perception. DSF binds with high affinity to a 22-amino acid sensor region at the N-terminus (By similarity). The response regulatory domain, but not the HPt domain, is required for repression of DSF biosynthesis (PubMed:20826346).</text>
</comment>
<comment type="PTM">
    <text evidence="1 7">Autophosphorylated (By similarity). Activation may require a sequential transfer of a phosphate group from a His in the primary transmitter domain, to an Asp in the receiver domain and to a His in the secondary transmitter domain (Probable).</text>
</comment>
<comment type="disruption phenotype">
    <text evidence="6">Deletion of the gene results in overproduction of DSF.</text>
</comment>
<sequence length="726" mass="79792">MKSPLPWLKRRLSGRADSEHAQNLIRIIITTLFISYLGWRYQHTHGDTLMATWLILVGELLVSLGLMVAILLRPQVSHTRRLIGMLLDYTCTGAIMAIQGEPASPLYAVCMWVTIGNGLRYGSNYLRAATAMGSLCFLGAILISPYWKANPYLSWGLLLGLIAVPLYFDSLLRAMTRAVREARHANQAKSRFLANMSHEFRTPLNGLSGMTEVLATTRLDAEQKECLNTIQASARSLLSLVEEVLDISAIEAGKIRIDRRDFSLREMIGSVNLILQPQARGRRLEYGTQVADDVPDLLKGDTAHLRQVLLNLVGNAVKFTEHGHVLLRVTRVSGSAEDAVRLRFDVEDTGIGVPMDMRPRLFEAFEQADVGLSRRYEGTGLGTTIAKGLVEAMGGSIGFKENQPSGSVFWFELPMAIGEPLKSSTVRVPTGALVDAPEELESSNIIAFSNPFLRHRARVRSMRMLVADDHEANRMVLQRLLEKAGHKVLCVNGAEQVLDAMAEEDYDAVIVDLHMPGMNGLDMLKQLRVMQASGMRYTPVVVLSADVTPEAIRACEQAGARAFLAKPVVAAKLLDTLADLAVSTRQLATPATTVQVATSFEGVLDSSVLDELAALGMGEEFERQFVRQCLDDAQNCVGDIERDGTCSDWEQLRESAHALRGVASNLGLAQVASSGGELMRMADWQLQAEWRLRLSTLREQLKAGKDALDARVQGVKDGECSPRSNE</sequence>
<organism>
    <name type="scientific">Xanthomonas campestris pv. campestris (strain ATCC 33913 / DSM 3586 / NCPPB 528 / LMG 568 / P 25)</name>
    <dbReference type="NCBI Taxonomy" id="190485"/>
    <lineage>
        <taxon>Bacteria</taxon>
        <taxon>Pseudomonadati</taxon>
        <taxon>Pseudomonadota</taxon>
        <taxon>Gammaproteobacteria</taxon>
        <taxon>Lysobacterales</taxon>
        <taxon>Lysobacteraceae</taxon>
        <taxon>Xanthomonas</taxon>
    </lineage>
</organism>
<accession>P0C0F6</accession>
<accession>P49246</accession>
<evidence type="ECO:0000250" key="1">
    <source>
        <dbReference type="UniProtKB" id="P0C0F7"/>
    </source>
</evidence>
<evidence type="ECO:0000255" key="2"/>
<evidence type="ECO:0000255" key="3">
    <source>
        <dbReference type="PROSITE-ProRule" id="PRU00107"/>
    </source>
</evidence>
<evidence type="ECO:0000255" key="4">
    <source>
        <dbReference type="PROSITE-ProRule" id="PRU00110"/>
    </source>
</evidence>
<evidence type="ECO:0000255" key="5">
    <source>
        <dbReference type="PROSITE-ProRule" id="PRU00169"/>
    </source>
</evidence>
<evidence type="ECO:0000269" key="6">
    <source>
    </source>
</evidence>
<evidence type="ECO:0000305" key="7"/>
<evidence type="ECO:0007744" key="8">
    <source>
        <dbReference type="PDB" id="3M6M"/>
    </source>
</evidence>
<evidence type="ECO:0007829" key="9">
    <source>
        <dbReference type="PDB" id="3M6M"/>
    </source>
</evidence>